<dbReference type="EC" id="4.2.1.59" evidence="1"/>
<dbReference type="EMBL" id="BA000040">
    <property type="protein sequence ID" value="BAC50116.1"/>
    <property type="molecule type" value="Genomic_DNA"/>
</dbReference>
<dbReference type="RefSeq" id="NP_771491.1">
    <property type="nucleotide sequence ID" value="NC_004463.1"/>
</dbReference>
<dbReference type="RefSeq" id="WP_011087619.1">
    <property type="nucleotide sequence ID" value="NC_004463.1"/>
</dbReference>
<dbReference type="SMR" id="Q89KQ3"/>
<dbReference type="FunCoup" id="Q89KQ3">
    <property type="interactions" value="548"/>
</dbReference>
<dbReference type="STRING" id="224911.AAV28_21565"/>
<dbReference type="EnsemblBacteria" id="BAC50116">
    <property type="protein sequence ID" value="BAC50116"/>
    <property type="gene ID" value="BAC50116"/>
</dbReference>
<dbReference type="GeneID" id="46491854"/>
<dbReference type="KEGG" id="bja:bll4851"/>
<dbReference type="PATRIC" id="fig|224911.44.peg.4696"/>
<dbReference type="eggNOG" id="COG0764">
    <property type="taxonomic scope" value="Bacteria"/>
</dbReference>
<dbReference type="HOGENOM" id="CLU_078912_1_0_5"/>
<dbReference type="InParanoid" id="Q89KQ3"/>
<dbReference type="OrthoDB" id="9772788at2"/>
<dbReference type="PhylomeDB" id="Q89KQ3"/>
<dbReference type="Proteomes" id="UP000002526">
    <property type="component" value="Chromosome"/>
</dbReference>
<dbReference type="GO" id="GO:0005737">
    <property type="term" value="C:cytoplasm"/>
    <property type="evidence" value="ECO:0007669"/>
    <property type="project" value="UniProtKB-SubCell"/>
</dbReference>
<dbReference type="GO" id="GO:0016020">
    <property type="term" value="C:membrane"/>
    <property type="evidence" value="ECO:0007669"/>
    <property type="project" value="GOC"/>
</dbReference>
<dbReference type="GO" id="GO:0019171">
    <property type="term" value="F:(3R)-hydroxyacyl-[acyl-carrier-protein] dehydratase activity"/>
    <property type="evidence" value="ECO:0007669"/>
    <property type="project" value="UniProtKB-EC"/>
</dbReference>
<dbReference type="GO" id="GO:0006633">
    <property type="term" value="P:fatty acid biosynthetic process"/>
    <property type="evidence" value="ECO:0007669"/>
    <property type="project" value="UniProtKB-UniRule"/>
</dbReference>
<dbReference type="GO" id="GO:0009245">
    <property type="term" value="P:lipid A biosynthetic process"/>
    <property type="evidence" value="ECO:0007669"/>
    <property type="project" value="UniProtKB-UniRule"/>
</dbReference>
<dbReference type="CDD" id="cd01288">
    <property type="entry name" value="FabZ"/>
    <property type="match status" value="1"/>
</dbReference>
<dbReference type="FunFam" id="3.10.129.10:FF:000001">
    <property type="entry name" value="3-hydroxyacyl-[acyl-carrier-protein] dehydratase FabZ"/>
    <property type="match status" value="1"/>
</dbReference>
<dbReference type="Gene3D" id="3.10.129.10">
    <property type="entry name" value="Hotdog Thioesterase"/>
    <property type="match status" value="1"/>
</dbReference>
<dbReference type="HAMAP" id="MF_00406">
    <property type="entry name" value="FabZ"/>
    <property type="match status" value="1"/>
</dbReference>
<dbReference type="InterPro" id="IPR013114">
    <property type="entry name" value="FabA_FabZ"/>
</dbReference>
<dbReference type="InterPro" id="IPR010084">
    <property type="entry name" value="FabZ"/>
</dbReference>
<dbReference type="InterPro" id="IPR029069">
    <property type="entry name" value="HotDog_dom_sf"/>
</dbReference>
<dbReference type="NCBIfam" id="TIGR01750">
    <property type="entry name" value="fabZ"/>
    <property type="match status" value="1"/>
</dbReference>
<dbReference type="NCBIfam" id="NF000582">
    <property type="entry name" value="PRK00006.1"/>
    <property type="match status" value="1"/>
</dbReference>
<dbReference type="PANTHER" id="PTHR30272">
    <property type="entry name" value="3-HYDROXYACYL-[ACYL-CARRIER-PROTEIN] DEHYDRATASE"/>
    <property type="match status" value="1"/>
</dbReference>
<dbReference type="PANTHER" id="PTHR30272:SF1">
    <property type="entry name" value="3-HYDROXYACYL-[ACYL-CARRIER-PROTEIN] DEHYDRATASE"/>
    <property type="match status" value="1"/>
</dbReference>
<dbReference type="Pfam" id="PF07977">
    <property type="entry name" value="FabA"/>
    <property type="match status" value="1"/>
</dbReference>
<dbReference type="SUPFAM" id="SSF54637">
    <property type="entry name" value="Thioesterase/thiol ester dehydrase-isomerase"/>
    <property type="match status" value="1"/>
</dbReference>
<feature type="chain" id="PRO_0000091648" description="3-hydroxyacyl-[acyl-carrier-protein] dehydratase FabZ">
    <location>
        <begin position="1"/>
        <end position="153"/>
    </location>
</feature>
<feature type="active site" evidence="1">
    <location>
        <position position="58"/>
    </location>
</feature>
<keyword id="KW-0963">Cytoplasm</keyword>
<keyword id="KW-0441">Lipid A biosynthesis</keyword>
<keyword id="KW-0444">Lipid biosynthesis</keyword>
<keyword id="KW-0443">Lipid metabolism</keyword>
<keyword id="KW-0456">Lyase</keyword>
<keyword id="KW-1185">Reference proteome</keyword>
<gene>
    <name evidence="1" type="primary">fabZ</name>
    <name type="ordered locus">bll4851</name>
</gene>
<name>FABZ_BRADU</name>
<proteinExistence type="inferred from homology"/>
<sequence>MTEGSPIKFELVDINAILQTLPHRFPMLLIDRVINIRADYSGIGIKNVTFNEPAFQGHFPERPVYPGVMMIEAMAQTAGVIGIKSVEGTEKPRAVYFLTIDKCKFRKPVLPGDTIEYHMRSLGRRKTMWWFHGDAKVNGQVVAEADVGAMLTD</sequence>
<reference key="1">
    <citation type="journal article" date="2002" name="DNA Res.">
        <title>Complete genomic sequence of nitrogen-fixing symbiotic bacterium Bradyrhizobium japonicum USDA110.</title>
        <authorList>
            <person name="Kaneko T."/>
            <person name="Nakamura Y."/>
            <person name="Sato S."/>
            <person name="Minamisawa K."/>
            <person name="Uchiumi T."/>
            <person name="Sasamoto S."/>
            <person name="Watanabe A."/>
            <person name="Idesawa K."/>
            <person name="Iriguchi M."/>
            <person name="Kawashima K."/>
            <person name="Kohara M."/>
            <person name="Matsumoto M."/>
            <person name="Shimpo S."/>
            <person name="Tsuruoka H."/>
            <person name="Wada T."/>
            <person name="Yamada M."/>
            <person name="Tabata S."/>
        </authorList>
    </citation>
    <scope>NUCLEOTIDE SEQUENCE [LARGE SCALE GENOMIC DNA]</scope>
    <source>
        <strain>JCM 10833 / BCRC 13528 / IAM 13628 / NBRC 14792 / USDA 110</strain>
    </source>
</reference>
<comment type="function">
    <text evidence="1">Involved in unsaturated fatty acids biosynthesis. Catalyzes the dehydration of short chain beta-hydroxyacyl-ACPs and long chain saturated and unsaturated beta-hydroxyacyl-ACPs.</text>
</comment>
<comment type="catalytic activity">
    <reaction evidence="1">
        <text>a (3R)-hydroxyacyl-[ACP] = a (2E)-enoyl-[ACP] + H2O</text>
        <dbReference type="Rhea" id="RHEA:13097"/>
        <dbReference type="Rhea" id="RHEA-COMP:9925"/>
        <dbReference type="Rhea" id="RHEA-COMP:9945"/>
        <dbReference type="ChEBI" id="CHEBI:15377"/>
        <dbReference type="ChEBI" id="CHEBI:78784"/>
        <dbReference type="ChEBI" id="CHEBI:78827"/>
        <dbReference type="EC" id="4.2.1.59"/>
    </reaction>
</comment>
<comment type="subcellular location">
    <subcellularLocation>
        <location evidence="1">Cytoplasm</location>
    </subcellularLocation>
</comment>
<comment type="similarity">
    <text evidence="1">Belongs to the thioester dehydratase family. FabZ subfamily.</text>
</comment>
<evidence type="ECO:0000255" key="1">
    <source>
        <dbReference type="HAMAP-Rule" id="MF_00406"/>
    </source>
</evidence>
<protein>
    <recommendedName>
        <fullName evidence="1">3-hydroxyacyl-[acyl-carrier-protein] dehydratase FabZ</fullName>
        <ecNumber evidence="1">4.2.1.59</ecNumber>
    </recommendedName>
    <alternativeName>
        <fullName evidence="1">(3R)-hydroxymyristoyl-[acyl-carrier-protein] dehydratase</fullName>
        <shortName evidence="1">(3R)-hydroxymyristoyl-ACP dehydrase</shortName>
    </alternativeName>
    <alternativeName>
        <fullName evidence="1">Beta-hydroxyacyl-ACP dehydratase</fullName>
    </alternativeName>
</protein>
<accession>Q89KQ3</accession>
<organism>
    <name type="scientific">Bradyrhizobium diazoefficiens (strain JCM 10833 / BCRC 13528 / IAM 13628 / NBRC 14792 / USDA 110)</name>
    <dbReference type="NCBI Taxonomy" id="224911"/>
    <lineage>
        <taxon>Bacteria</taxon>
        <taxon>Pseudomonadati</taxon>
        <taxon>Pseudomonadota</taxon>
        <taxon>Alphaproteobacteria</taxon>
        <taxon>Hyphomicrobiales</taxon>
        <taxon>Nitrobacteraceae</taxon>
        <taxon>Bradyrhizobium</taxon>
    </lineage>
</organism>